<proteinExistence type="inferred from homology"/>
<sequence length="155" mass="17972">MKCPFCGHSNTQVLDTRMSEDGDAVRRRRRCEACDRRFTTYERIELFFPAIVKKNGSRVDYTRAKLKDSMRLALRKRPVSAEAIDEAITRIEEKLLALGEKEIPSSQVGELVMRELRKLDKIAYIRFASVYRSFEDVSEFRDVLDEFAASTPRKG</sequence>
<protein>
    <recommendedName>
        <fullName evidence="1">Transcriptional repressor NrdR</fullName>
    </recommendedName>
</protein>
<feature type="chain" id="PRO_1000080808" description="Transcriptional repressor NrdR">
    <location>
        <begin position="1"/>
        <end position="155"/>
    </location>
</feature>
<feature type="domain" description="ATP-cone" evidence="1">
    <location>
        <begin position="49"/>
        <end position="139"/>
    </location>
</feature>
<feature type="zinc finger region" evidence="1">
    <location>
        <begin position="3"/>
        <end position="34"/>
    </location>
</feature>
<accession>Q0K7V9</accession>
<gene>
    <name evidence="1" type="primary">nrdR</name>
    <name type="ordered locus">H16_A2835</name>
</gene>
<dbReference type="EMBL" id="AM260479">
    <property type="protein sequence ID" value="CAJ93912.1"/>
    <property type="molecule type" value="Genomic_DNA"/>
</dbReference>
<dbReference type="RefSeq" id="WP_010813743.1">
    <property type="nucleotide sequence ID" value="NZ_CP039287.1"/>
</dbReference>
<dbReference type="SMR" id="Q0K7V9"/>
<dbReference type="STRING" id="381666.H16_A2835"/>
<dbReference type="GeneID" id="34311165"/>
<dbReference type="KEGG" id="reh:H16_A2835"/>
<dbReference type="eggNOG" id="COG1327">
    <property type="taxonomic scope" value="Bacteria"/>
</dbReference>
<dbReference type="HOGENOM" id="CLU_108412_0_0_4"/>
<dbReference type="OrthoDB" id="9807461at2"/>
<dbReference type="Proteomes" id="UP000008210">
    <property type="component" value="Chromosome 1"/>
</dbReference>
<dbReference type="GO" id="GO:0005524">
    <property type="term" value="F:ATP binding"/>
    <property type="evidence" value="ECO:0007669"/>
    <property type="project" value="UniProtKB-KW"/>
</dbReference>
<dbReference type="GO" id="GO:0003677">
    <property type="term" value="F:DNA binding"/>
    <property type="evidence" value="ECO:0007669"/>
    <property type="project" value="UniProtKB-KW"/>
</dbReference>
<dbReference type="GO" id="GO:0008270">
    <property type="term" value="F:zinc ion binding"/>
    <property type="evidence" value="ECO:0007669"/>
    <property type="project" value="UniProtKB-UniRule"/>
</dbReference>
<dbReference type="GO" id="GO:0045892">
    <property type="term" value="P:negative regulation of DNA-templated transcription"/>
    <property type="evidence" value="ECO:0007669"/>
    <property type="project" value="UniProtKB-UniRule"/>
</dbReference>
<dbReference type="HAMAP" id="MF_00440">
    <property type="entry name" value="NrdR"/>
    <property type="match status" value="1"/>
</dbReference>
<dbReference type="InterPro" id="IPR005144">
    <property type="entry name" value="ATP-cone_dom"/>
</dbReference>
<dbReference type="InterPro" id="IPR055173">
    <property type="entry name" value="NrdR-like_N"/>
</dbReference>
<dbReference type="InterPro" id="IPR003796">
    <property type="entry name" value="RNR_NrdR-like"/>
</dbReference>
<dbReference type="NCBIfam" id="TIGR00244">
    <property type="entry name" value="transcriptional regulator NrdR"/>
    <property type="match status" value="1"/>
</dbReference>
<dbReference type="PANTHER" id="PTHR30455">
    <property type="entry name" value="TRANSCRIPTIONAL REPRESSOR NRDR"/>
    <property type="match status" value="1"/>
</dbReference>
<dbReference type="PANTHER" id="PTHR30455:SF2">
    <property type="entry name" value="TRANSCRIPTIONAL REPRESSOR NRDR"/>
    <property type="match status" value="1"/>
</dbReference>
<dbReference type="Pfam" id="PF03477">
    <property type="entry name" value="ATP-cone"/>
    <property type="match status" value="1"/>
</dbReference>
<dbReference type="Pfam" id="PF22811">
    <property type="entry name" value="Zn_ribbon_NrdR"/>
    <property type="match status" value="1"/>
</dbReference>
<dbReference type="PROSITE" id="PS51161">
    <property type="entry name" value="ATP_CONE"/>
    <property type="match status" value="1"/>
</dbReference>
<evidence type="ECO:0000255" key="1">
    <source>
        <dbReference type="HAMAP-Rule" id="MF_00440"/>
    </source>
</evidence>
<reference key="1">
    <citation type="journal article" date="2006" name="Nat. Biotechnol.">
        <title>Genome sequence of the bioplastic-producing 'Knallgas' bacterium Ralstonia eutropha H16.</title>
        <authorList>
            <person name="Pohlmann A."/>
            <person name="Fricke W.F."/>
            <person name="Reinecke F."/>
            <person name="Kusian B."/>
            <person name="Liesegang H."/>
            <person name="Cramm R."/>
            <person name="Eitinger T."/>
            <person name="Ewering C."/>
            <person name="Poetter M."/>
            <person name="Schwartz E."/>
            <person name="Strittmatter A."/>
            <person name="Voss I."/>
            <person name="Gottschalk G."/>
            <person name="Steinbuechel A."/>
            <person name="Friedrich B."/>
            <person name="Bowien B."/>
        </authorList>
    </citation>
    <scope>NUCLEOTIDE SEQUENCE [LARGE SCALE GENOMIC DNA]</scope>
    <source>
        <strain>ATCC 17699 / DSM 428 / KCTC 22496 / NCIMB 10442 / H16 / Stanier 337</strain>
    </source>
</reference>
<name>NRDR_CUPNH</name>
<keyword id="KW-0067">ATP-binding</keyword>
<keyword id="KW-0238">DNA-binding</keyword>
<keyword id="KW-0479">Metal-binding</keyword>
<keyword id="KW-0547">Nucleotide-binding</keyword>
<keyword id="KW-1185">Reference proteome</keyword>
<keyword id="KW-0678">Repressor</keyword>
<keyword id="KW-0804">Transcription</keyword>
<keyword id="KW-0805">Transcription regulation</keyword>
<keyword id="KW-0862">Zinc</keyword>
<keyword id="KW-0863">Zinc-finger</keyword>
<organism>
    <name type="scientific">Cupriavidus necator (strain ATCC 17699 / DSM 428 / KCTC 22496 / NCIMB 10442 / H16 / Stanier 337)</name>
    <name type="common">Ralstonia eutropha</name>
    <dbReference type="NCBI Taxonomy" id="381666"/>
    <lineage>
        <taxon>Bacteria</taxon>
        <taxon>Pseudomonadati</taxon>
        <taxon>Pseudomonadota</taxon>
        <taxon>Betaproteobacteria</taxon>
        <taxon>Burkholderiales</taxon>
        <taxon>Burkholderiaceae</taxon>
        <taxon>Cupriavidus</taxon>
    </lineage>
</organism>
<comment type="function">
    <text evidence="1">Negatively regulates transcription of bacterial ribonucleotide reductase nrd genes and operons by binding to NrdR-boxes.</text>
</comment>
<comment type="cofactor">
    <cofactor evidence="1">
        <name>Zn(2+)</name>
        <dbReference type="ChEBI" id="CHEBI:29105"/>
    </cofactor>
    <text evidence="1">Binds 1 zinc ion.</text>
</comment>
<comment type="similarity">
    <text evidence="1">Belongs to the NrdR family.</text>
</comment>